<reference key="1">
    <citation type="submission" date="2007-08" db="EMBL/GenBank/DDBJ databases">
        <title>Complete sequence of Shewanella sediminis HAW-EB3.</title>
        <authorList>
            <consortium name="US DOE Joint Genome Institute"/>
            <person name="Copeland A."/>
            <person name="Lucas S."/>
            <person name="Lapidus A."/>
            <person name="Barry K."/>
            <person name="Glavina del Rio T."/>
            <person name="Dalin E."/>
            <person name="Tice H."/>
            <person name="Pitluck S."/>
            <person name="Chertkov O."/>
            <person name="Brettin T."/>
            <person name="Bruce D."/>
            <person name="Detter J.C."/>
            <person name="Han C."/>
            <person name="Schmutz J."/>
            <person name="Larimer F."/>
            <person name="Land M."/>
            <person name="Hauser L."/>
            <person name="Kyrpides N."/>
            <person name="Kim E."/>
            <person name="Zhao J.-S."/>
            <person name="Richardson P."/>
        </authorList>
    </citation>
    <scope>NUCLEOTIDE SEQUENCE [LARGE SCALE GENOMIC DNA]</scope>
    <source>
        <strain>HAW-EB3</strain>
    </source>
</reference>
<sequence>MPKIITLMGPTASGKTALAIDLVQKHNCEIISVDSALIYRSMDIGTAKPSADELALAPHRLIDIRDPAESYSAADFRADALHEIEQILKAGKTPLLVGGTMMYFKALLEGLSPLPAADEALRAQIILEAEQRGWQDMHDELKRLDPVSSERIHPNDPQRLIRALEVCRISGKSMTELSQIKSEPLPYDVVQFAISPKDRKVLHISIEERFKLMLNQGFVDEVRALKKRSDLNLALPSMRCVGYRQCWQYLDGEFDYDTMVEKAIVATRQLAKRQLTWLRGWPELNWLESGVDSNLNTVLRHCR</sequence>
<name>MIAA1_SHESH</name>
<accession>A8FRD4</accession>
<gene>
    <name evidence="1" type="primary">miaA1</name>
    <name type="ordered locus">Ssed_0796</name>
</gene>
<comment type="function">
    <text evidence="1">Catalyzes the transfer of a dimethylallyl group onto the adenine at position 37 in tRNAs that read codons beginning with uridine, leading to the formation of N6-(dimethylallyl)adenosine (i(6)A).</text>
</comment>
<comment type="catalytic activity">
    <reaction evidence="1">
        <text>adenosine(37) in tRNA + dimethylallyl diphosphate = N(6)-dimethylallyladenosine(37) in tRNA + diphosphate</text>
        <dbReference type="Rhea" id="RHEA:26482"/>
        <dbReference type="Rhea" id="RHEA-COMP:10162"/>
        <dbReference type="Rhea" id="RHEA-COMP:10375"/>
        <dbReference type="ChEBI" id="CHEBI:33019"/>
        <dbReference type="ChEBI" id="CHEBI:57623"/>
        <dbReference type="ChEBI" id="CHEBI:74411"/>
        <dbReference type="ChEBI" id="CHEBI:74415"/>
        <dbReference type="EC" id="2.5.1.75"/>
    </reaction>
</comment>
<comment type="cofactor">
    <cofactor evidence="1">
        <name>Mg(2+)</name>
        <dbReference type="ChEBI" id="CHEBI:18420"/>
    </cofactor>
</comment>
<comment type="subunit">
    <text evidence="1">Monomer.</text>
</comment>
<comment type="similarity">
    <text evidence="1">Belongs to the IPP transferase family.</text>
</comment>
<organism>
    <name type="scientific">Shewanella sediminis (strain HAW-EB3)</name>
    <dbReference type="NCBI Taxonomy" id="425104"/>
    <lineage>
        <taxon>Bacteria</taxon>
        <taxon>Pseudomonadati</taxon>
        <taxon>Pseudomonadota</taxon>
        <taxon>Gammaproteobacteria</taxon>
        <taxon>Alteromonadales</taxon>
        <taxon>Shewanellaceae</taxon>
        <taxon>Shewanella</taxon>
    </lineage>
</organism>
<evidence type="ECO:0000255" key="1">
    <source>
        <dbReference type="HAMAP-Rule" id="MF_00185"/>
    </source>
</evidence>
<keyword id="KW-0067">ATP-binding</keyword>
<keyword id="KW-0460">Magnesium</keyword>
<keyword id="KW-0547">Nucleotide-binding</keyword>
<keyword id="KW-1185">Reference proteome</keyword>
<keyword id="KW-0808">Transferase</keyword>
<keyword id="KW-0819">tRNA processing</keyword>
<dbReference type="EC" id="2.5.1.75" evidence="1"/>
<dbReference type="EMBL" id="CP000821">
    <property type="protein sequence ID" value="ABV35407.1"/>
    <property type="molecule type" value="Genomic_DNA"/>
</dbReference>
<dbReference type="RefSeq" id="WP_012141143.1">
    <property type="nucleotide sequence ID" value="NC_009831.1"/>
</dbReference>
<dbReference type="SMR" id="A8FRD4"/>
<dbReference type="STRING" id="425104.Ssed_0796"/>
<dbReference type="KEGG" id="sse:Ssed_0796"/>
<dbReference type="eggNOG" id="COG0324">
    <property type="taxonomic scope" value="Bacteria"/>
</dbReference>
<dbReference type="HOGENOM" id="CLU_032616_0_0_6"/>
<dbReference type="Proteomes" id="UP000002015">
    <property type="component" value="Chromosome"/>
</dbReference>
<dbReference type="GO" id="GO:0005524">
    <property type="term" value="F:ATP binding"/>
    <property type="evidence" value="ECO:0007669"/>
    <property type="project" value="UniProtKB-UniRule"/>
</dbReference>
<dbReference type="GO" id="GO:0052381">
    <property type="term" value="F:tRNA dimethylallyltransferase activity"/>
    <property type="evidence" value="ECO:0007669"/>
    <property type="project" value="UniProtKB-UniRule"/>
</dbReference>
<dbReference type="GO" id="GO:0006400">
    <property type="term" value="P:tRNA modification"/>
    <property type="evidence" value="ECO:0007669"/>
    <property type="project" value="TreeGrafter"/>
</dbReference>
<dbReference type="FunFam" id="1.10.20.140:FF:000001">
    <property type="entry name" value="tRNA dimethylallyltransferase"/>
    <property type="match status" value="1"/>
</dbReference>
<dbReference type="Gene3D" id="1.10.20.140">
    <property type="match status" value="1"/>
</dbReference>
<dbReference type="Gene3D" id="3.40.50.300">
    <property type="entry name" value="P-loop containing nucleotide triphosphate hydrolases"/>
    <property type="match status" value="1"/>
</dbReference>
<dbReference type="HAMAP" id="MF_00185">
    <property type="entry name" value="IPP_trans"/>
    <property type="match status" value="1"/>
</dbReference>
<dbReference type="InterPro" id="IPR039657">
    <property type="entry name" value="Dimethylallyltransferase"/>
</dbReference>
<dbReference type="InterPro" id="IPR018022">
    <property type="entry name" value="IPT"/>
</dbReference>
<dbReference type="InterPro" id="IPR027417">
    <property type="entry name" value="P-loop_NTPase"/>
</dbReference>
<dbReference type="NCBIfam" id="TIGR00174">
    <property type="entry name" value="miaA"/>
    <property type="match status" value="1"/>
</dbReference>
<dbReference type="PANTHER" id="PTHR11088">
    <property type="entry name" value="TRNA DIMETHYLALLYLTRANSFERASE"/>
    <property type="match status" value="1"/>
</dbReference>
<dbReference type="PANTHER" id="PTHR11088:SF60">
    <property type="entry name" value="TRNA DIMETHYLALLYLTRANSFERASE"/>
    <property type="match status" value="1"/>
</dbReference>
<dbReference type="Pfam" id="PF01715">
    <property type="entry name" value="IPPT"/>
    <property type="match status" value="1"/>
</dbReference>
<dbReference type="SUPFAM" id="SSF52540">
    <property type="entry name" value="P-loop containing nucleoside triphosphate hydrolases"/>
    <property type="match status" value="1"/>
</dbReference>
<feature type="chain" id="PRO_0000377316" description="tRNA dimethylallyltransferase 1">
    <location>
        <begin position="1"/>
        <end position="303"/>
    </location>
</feature>
<feature type="region of interest" description="Interaction with substrate tRNA" evidence="1">
    <location>
        <begin position="34"/>
        <end position="37"/>
    </location>
</feature>
<feature type="region of interest" description="Interaction with substrate tRNA" evidence="1">
    <location>
        <begin position="158"/>
        <end position="162"/>
    </location>
</feature>
<feature type="region of interest" description="Interaction with substrate tRNA" evidence="1">
    <location>
        <begin position="239"/>
        <end position="244"/>
    </location>
</feature>
<feature type="binding site" evidence="1">
    <location>
        <begin position="9"/>
        <end position="16"/>
    </location>
    <ligand>
        <name>ATP</name>
        <dbReference type="ChEBI" id="CHEBI:30616"/>
    </ligand>
</feature>
<feature type="binding site" evidence="1">
    <location>
        <begin position="11"/>
        <end position="16"/>
    </location>
    <ligand>
        <name>substrate</name>
    </ligand>
</feature>
<feature type="site" description="Interaction with substrate tRNA" evidence="1">
    <location>
        <position position="100"/>
    </location>
</feature>
<feature type="site" description="Interaction with substrate tRNA" evidence="1">
    <location>
        <position position="122"/>
    </location>
</feature>
<proteinExistence type="inferred from homology"/>
<protein>
    <recommendedName>
        <fullName evidence="1">tRNA dimethylallyltransferase 1</fullName>
        <ecNumber evidence="1">2.5.1.75</ecNumber>
    </recommendedName>
    <alternativeName>
        <fullName evidence="1">Dimethylallyl diphosphate:tRNA dimethylallyltransferase 1</fullName>
        <shortName evidence="1">DMAPP:tRNA dimethylallyltransferase 1</shortName>
        <shortName evidence="1">DMATase 1</shortName>
    </alternativeName>
    <alternativeName>
        <fullName evidence="1">Isopentenyl-diphosphate:tRNA isopentenyltransferase 1</fullName>
        <shortName evidence="1">IPP transferase 1</shortName>
        <shortName evidence="1">IPPT 1</shortName>
        <shortName evidence="1">IPTase 1</shortName>
    </alternativeName>
</protein>